<reference key="1">
    <citation type="journal article" date="1997" name="Mol. Immunol.">
        <title>Molecular cloning and expression of the functional rat C5a receptor.</title>
        <authorList>
            <person name="Rothermel E."/>
            <person name="Zwirner J."/>
            <person name="Vogt T."/>
            <person name="Rabini S."/>
            <person name="Goetze O."/>
        </authorList>
    </citation>
    <scope>NUCLEOTIDE SEQUENCE [MRNA]</scope>
    <scope>FUNCTION</scope>
    <scope>SUBCELLULAR LOCATION</scope>
    <source>
        <strain>Sprague-Dawley</strain>
    </source>
</reference>
<reference key="2">
    <citation type="journal article" date="1997" name="Microbiol. Immunol.">
        <title>cDNA cloning and characterization of rat C5a anaphylatoxin receptor.</title>
        <authorList>
            <person name="Akatsu H."/>
            <person name="Miwa T."/>
            <person name="Sakurada C."/>
            <person name="Fukuoka Y."/>
            <person name="Ember J."/>
            <person name="Yamamoto T."/>
            <person name="Hugli T.E."/>
            <person name="Okada H."/>
        </authorList>
    </citation>
    <scope>NUCLEOTIDE SEQUENCE [MRNA]</scope>
    <source>
        <strain>Wistar</strain>
        <tissue>Lung</tissue>
    </source>
</reference>
<reference key="3">
    <citation type="journal article" date="2004" name="Genome Res.">
        <title>The status, quality, and expansion of the NIH full-length cDNA project: the Mammalian Gene Collection (MGC).</title>
        <authorList>
            <consortium name="The MGC Project Team"/>
        </authorList>
    </citation>
    <scope>NUCLEOTIDE SEQUENCE [LARGE SCALE MRNA]</scope>
    <source>
        <tissue>Lung</tissue>
    </source>
</reference>
<reference key="4">
    <citation type="journal article" date="2003" name="J. Biol. Chem.">
        <title>Phosphorylation of key serine residues is required for internalization of the complement 5a (C5a) anaphylatoxin receptor via a beta-arrestin, dynamin, and clathrin-dependent pathway.</title>
        <authorList>
            <person name="Braun L."/>
            <person name="Christophe T."/>
            <person name="Boulay F."/>
        </authorList>
    </citation>
    <scope>INTERACTION WITH ARRB1 AND ARRB2</scope>
    <scope>SUBCELLULAR LOCATION</scope>
</reference>
<reference key="5">
    <citation type="journal article" date="2012" name="Nat. Commun.">
        <title>Quantitative maps of protein phosphorylation sites across 14 different rat organs and tissues.</title>
        <authorList>
            <person name="Lundby A."/>
            <person name="Secher A."/>
            <person name="Lage K."/>
            <person name="Nordsborg N.B."/>
            <person name="Dmytriyev A."/>
            <person name="Lundby C."/>
            <person name="Olsen J.V."/>
        </authorList>
    </citation>
    <scope>PHOSPHORYLATION [LARGE SCALE ANALYSIS] AT SER-326; SER-329 AND SER-334</scope>
    <scope>IDENTIFICATION BY MASS SPECTROMETRY [LARGE SCALE ANALYSIS]</scope>
</reference>
<accession>P97520</accession>
<accession>O09088</accession>
<protein>
    <recommendedName>
        <fullName>C5a anaphylatoxin chemotactic receptor 1</fullName>
    </recommendedName>
    <alternativeName>
        <fullName>C5a anaphylatoxin chemotactic receptor</fullName>
        <shortName>C5a-R</shortName>
        <shortName>C5aR</shortName>
    </alternativeName>
    <cdAntigenName>CD88</cdAntigenName>
</protein>
<feature type="chain" id="PRO_0000069215" description="C5a anaphylatoxin chemotactic receptor 1">
    <location>
        <begin position="1"/>
        <end position="352"/>
    </location>
</feature>
<feature type="topological domain" description="Extracellular" evidence="7">
    <location>
        <begin position="1"/>
        <end position="38"/>
    </location>
</feature>
<feature type="transmembrane region" description="Helical; Name=1" evidence="1">
    <location>
        <begin position="39"/>
        <end position="65"/>
    </location>
</feature>
<feature type="topological domain" description="Cytoplasmic" evidence="7">
    <location>
        <begin position="66"/>
        <end position="70"/>
    </location>
</feature>
<feature type="transmembrane region" description="Helical; Name=2" evidence="1">
    <location>
        <begin position="71"/>
        <end position="94"/>
    </location>
</feature>
<feature type="topological domain" description="Extracellular" evidence="7">
    <location>
        <begin position="95"/>
        <end position="111"/>
    </location>
</feature>
<feature type="transmembrane region" description="Helical; Name=3" evidence="1">
    <location>
        <begin position="112"/>
        <end position="133"/>
    </location>
</feature>
<feature type="topological domain" description="Cytoplasmic" evidence="7">
    <location>
        <begin position="134"/>
        <end position="154"/>
    </location>
</feature>
<feature type="transmembrane region" description="Helical; Name=4" evidence="1">
    <location>
        <begin position="155"/>
        <end position="175"/>
    </location>
</feature>
<feature type="topological domain" description="Extracellular" evidence="7">
    <location>
        <begin position="176"/>
        <end position="202"/>
    </location>
</feature>
<feature type="transmembrane region" description="Helical; Name=5" evidence="1">
    <location>
        <begin position="203"/>
        <end position="228"/>
    </location>
</feature>
<feature type="topological domain" description="Cytoplasmic" evidence="7">
    <location>
        <begin position="229"/>
        <end position="244"/>
    </location>
</feature>
<feature type="transmembrane region" description="Helical; Name=6" evidence="1">
    <location>
        <begin position="245"/>
        <end position="267"/>
    </location>
</feature>
<feature type="topological domain" description="Extracellular" evidence="7">
    <location>
        <begin position="268"/>
        <end position="284"/>
    </location>
</feature>
<feature type="transmembrane region" description="Helical; Name=7" evidence="1">
    <location>
        <begin position="285"/>
        <end position="305"/>
    </location>
</feature>
<feature type="topological domain" description="Cytoplasmic" evidence="7">
    <location>
        <begin position="306"/>
        <end position="352"/>
    </location>
</feature>
<feature type="region of interest" description="Disordered" evidence="4">
    <location>
        <begin position="1"/>
        <end position="20"/>
    </location>
</feature>
<feature type="region of interest" description="Disordered" evidence="4">
    <location>
        <begin position="332"/>
        <end position="352"/>
    </location>
</feature>
<feature type="compositionally biased region" description="Polar residues" evidence="4">
    <location>
        <begin position="1"/>
        <end position="11"/>
    </location>
</feature>
<feature type="compositionally biased region" description="Polar residues" evidence="4">
    <location>
        <begin position="337"/>
        <end position="352"/>
    </location>
</feature>
<feature type="modified residue" description="Sulfotyrosine" evidence="1">
    <location>
        <position position="13"/>
    </location>
</feature>
<feature type="modified residue" description="Sulfotyrosine" evidence="1">
    <location>
        <position position="15"/>
    </location>
</feature>
<feature type="modified residue" description="Phosphoserine" evidence="1">
    <location>
        <position position="316"/>
    </location>
</feature>
<feature type="modified residue" description="Phosphoserine" evidence="1">
    <location>
        <position position="319"/>
    </location>
</feature>
<feature type="modified residue" description="Phosphoserine" evidence="8">
    <location>
        <position position="326"/>
    </location>
</feature>
<feature type="modified residue" description="Phosphoserine" evidence="8">
    <location>
        <position position="329"/>
    </location>
</feature>
<feature type="modified residue" description="Phosphoserine" evidence="8">
    <location>
        <position position="334"/>
    </location>
</feature>
<feature type="modified residue" description="Phosphoserine" evidence="1">
    <location>
        <position position="336"/>
    </location>
</feature>
<feature type="modified residue" description="Phosphoserine" evidence="1">
    <location>
        <position position="340"/>
    </location>
</feature>
<feature type="glycosylation site" description="N-linked (GlcNAc...) asparagine" evidence="2">
    <location>
        <position position="6"/>
    </location>
</feature>
<feature type="disulfide bond" evidence="3">
    <location>
        <begin position="110"/>
        <end position="189"/>
    </location>
</feature>
<name>C5AR1_RAT</name>
<evidence type="ECO:0000250" key="1">
    <source>
        <dbReference type="UniProtKB" id="P21730"/>
    </source>
</evidence>
<evidence type="ECO:0000255" key="2"/>
<evidence type="ECO:0000255" key="3">
    <source>
        <dbReference type="PROSITE-ProRule" id="PRU00521"/>
    </source>
</evidence>
<evidence type="ECO:0000256" key="4">
    <source>
        <dbReference type="SAM" id="MobiDB-lite"/>
    </source>
</evidence>
<evidence type="ECO:0000269" key="5">
    <source>
    </source>
</evidence>
<evidence type="ECO:0000269" key="6">
    <source>
    </source>
</evidence>
<evidence type="ECO:0000305" key="7"/>
<evidence type="ECO:0007744" key="8">
    <source>
    </source>
</evidence>
<comment type="function">
    <text evidence="1 6">Receptor for the chemotactic and inflammatory peptide anaphylatoxin C5a (PubMed:9464523). The ligand interacts with at least two sites on the receptor: a high-affinity site on the extracellular N-terminus, and a second site in the transmembrane region which activates downstream signaling events. Receptor activation stimulates chemotaxis, granule enzyme release, intracellular calcium release and superoxide anion production (By similarity).</text>
</comment>
<comment type="subunit">
    <text evidence="1 5">Homodimer. May also form higher-order oligomers (By similarity). Interacts (when phosphorylated) with ARRB1 and ARRB2; the interaction is associated with internalization of C5aR (PubMed:12464600).</text>
</comment>
<comment type="subcellular location">
    <subcellularLocation>
        <location evidence="5 6">Cell membrane</location>
        <topology evidence="1">Multi-pass membrane protein</topology>
    </subcellularLocation>
    <subcellularLocation>
        <location evidence="5">Cytoplasmic vesicle</location>
    </subcellularLocation>
    <text evidence="5">Phosphorylated C5aR colocalizes with ARRB1 and ARRB2 in cytoplasmic vesicles.</text>
</comment>
<comment type="PTM">
    <text evidence="1">Sulfation plays a critical role in the association of C5aR with C5a, but no significant role in the ability of the receptor to transduce a signal and mobilize calcium in response to a small peptide agonist.</text>
</comment>
<comment type="PTM">
    <text evidence="1">Phosphorylated on serine residues in response to C5a binding, resulting in internalization of the receptor and short-term desensitization to the ligand.</text>
</comment>
<comment type="similarity">
    <text evidence="3">Belongs to the G-protein coupled receptor 1 family.</text>
</comment>
<dbReference type="EMBL" id="Y09613">
    <property type="protein sequence ID" value="CAA70825.1"/>
    <property type="molecule type" value="mRNA"/>
</dbReference>
<dbReference type="EMBL" id="AB003042">
    <property type="protein sequence ID" value="BAA20263.1"/>
    <property type="molecule type" value="mRNA"/>
</dbReference>
<dbReference type="EMBL" id="BC078770">
    <property type="protein sequence ID" value="AAH78770.1"/>
    <property type="molecule type" value="mRNA"/>
</dbReference>
<dbReference type="RefSeq" id="NP_446071.1">
    <property type="nucleotide sequence ID" value="NM_053619.2"/>
</dbReference>
<dbReference type="SMR" id="P97520"/>
<dbReference type="FunCoup" id="P97520">
    <property type="interactions" value="177"/>
</dbReference>
<dbReference type="STRING" id="10116.ENSRNOP00000064558"/>
<dbReference type="BindingDB" id="P97520"/>
<dbReference type="ChEMBL" id="CHEMBL5770"/>
<dbReference type="GlyCosmos" id="P97520">
    <property type="glycosylation" value="1 site, No reported glycans"/>
</dbReference>
<dbReference type="GlyGen" id="P97520">
    <property type="glycosylation" value="1 site"/>
</dbReference>
<dbReference type="iPTMnet" id="P97520"/>
<dbReference type="PhosphoSitePlus" id="P97520"/>
<dbReference type="PaxDb" id="10116-ENSRNOP00000064558"/>
<dbReference type="GeneID" id="113959"/>
<dbReference type="KEGG" id="rno:113959"/>
<dbReference type="AGR" id="RGD:70553"/>
<dbReference type="CTD" id="728"/>
<dbReference type="RGD" id="70553">
    <property type="gene designation" value="C5ar1"/>
</dbReference>
<dbReference type="eggNOG" id="ENOG502R35Z">
    <property type="taxonomic scope" value="Eukaryota"/>
</dbReference>
<dbReference type="HOGENOM" id="CLU_009579_8_0_1"/>
<dbReference type="InParanoid" id="P97520"/>
<dbReference type="OrthoDB" id="9835842at2759"/>
<dbReference type="PhylomeDB" id="P97520"/>
<dbReference type="Reactome" id="R-RNO-375276">
    <property type="pathway name" value="Peptide ligand-binding receptors"/>
</dbReference>
<dbReference type="Reactome" id="R-RNO-418594">
    <property type="pathway name" value="G alpha (i) signalling events"/>
</dbReference>
<dbReference type="Reactome" id="R-RNO-6798695">
    <property type="pathway name" value="Neutrophil degranulation"/>
</dbReference>
<dbReference type="Reactome" id="R-RNO-977606">
    <property type="pathway name" value="Regulation of Complement cascade"/>
</dbReference>
<dbReference type="PRO" id="PR:P97520"/>
<dbReference type="Proteomes" id="UP000002494">
    <property type="component" value="Chromosome 1"/>
</dbReference>
<dbReference type="Bgee" id="ENSRNOG00000047800">
    <property type="expression patterns" value="Expressed in lung and 19 other cell types or tissues"/>
</dbReference>
<dbReference type="GO" id="GO:0045177">
    <property type="term" value="C:apical part of cell"/>
    <property type="evidence" value="ECO:0000250"/>
    <property type="project" value="UniProtKB"/>
</dbReference>
<dbReference type="GO" id="GO:0016323">
    <property type="term" value="C:basolateral plasma membrane"/>
    <property type="evidence" value="ECO:0000250"/>
    <property type="project" value="UniProtKB"/>
</dbReference>
<dbReference type="GO" id="GO:0009986">
    <property type="term" value="C:cell surface"/>
    <property type="evidence" value="ECO:0000314"/>
    <property type="project" value="RGD"/>
</dbReference>
<dbReference type="GO" id="GO:0031410">
    <property type="term" value="C:cytoplasmic vesicle"/>
    <property type="evidence" value="ECO:0007669"/>
    <property type="project" value="UniProtKB-KW"/>
</dbReference>
<dbReference type="GO" id="GO:0005886">
    <property type="term" value="C:plasma membrane"/>
    <property type="evidence" value="ECO:0000318"/>
    <property type="project" value="GO_Central"/>
</dbReference>
<dbReference type="GO" id="GO:0001856">
    <property type="term" value="F:complement component C5a binding"/>
    <property type="evidence" value="ECO:0000314"/>
    <property type="project" value="RGD"/>
</dbReference>
<dbReference type="GO" id="GO:0004878">
    <property type="term" value="F:complement component C5a receptor activity"/>
    <property type="evidence" value="ECO:0000314"/>
    <property type="project" value="RGD"/>
</dbReference>
<dbReference type="GO" id="GO:0004930">
    <property type="term" value="F:G protein-coupled receptor activity"/>
    <property type="evidence" value="ECO:0000266"/>
    <property type="project" value="RGD"/>
</dbReference>
<dbReference type="GO" id="GO:0097242">
    <property type="term" value="P:amyloid-beta clearance"/>
    <property type="evidence" value="ECO:0000266"/>
    <property type="project" value="RGD"/>
</dbReference>
<dbReference type="GO" id="GO:0031100">
    <property type="term" value="P:animal organ regeneration"/>
    <property type="evidence" value="ECO:0000270"/>
    <property type="project" value="RGD"/>
</dbReference>
<dbReference type="GO" id="GO:0048143">
    <property type="term" value="P:astrocyte activation"/>
    <property type="evidence" value="ECO:0000266"/>
    <property type="project" value="RGD"/>
</dbReference>
<dbReference type="GO" id="GO:0021534">
    <property type="term" value="P:cell proliferation in hindbrain"/>
    <property type="evidence" value="ECO:0000315"/>
    <property type="project" value="RGD"/>
</dbReference>
<dbReference type="GO" id="GO:0050890">
    <property type="term" value="P:cognition"/>
    <property type="evidence" value="ECO:0000266"/>
    <property type="project" value="RGD"/>
</dbReference>
<dbReference type="GO" id="GO:0038178">
    <property type="term" value="P:complement component C5a signaling pathway"/>
    <property type="evidence" value="ECO:0000266"/>
    <property type="project" value="RGD"/>
</dbReference>
<dbReference type="GO" id="GO:0002430">
    <property type="term" value="P:complement receptor mediated signaling pathway"/>
    <property type="evidence" value="ECO:0000318"/>
    <property type="project" value="GO_Central"/>
</dbReference>
<dbReference type="GO" id="GO:0050830">
    <property type="term" value="P:defense response to Gram-positive bacterium"/>
    <property type="evidence" value="ECO:0000266"/>
    <property type="project" value="RGD"/>
</dbReference>
<dbReference type="GO" id="GO:0007186">
    <property type="term" value="P:G protein-coupled receptor signaling pathway"/>
    <property type="evidence" value="ECO:0000266"/>
    <property type="project" value="RGD"/>
</dbReference>
<dbReference type="GO" id="GO:0006954">
    <property type="term" value="P:inflammatory response"/>
    <property type="evidence" value="ECO:0000318"/>
    <property type="project" value="GO_Central"/>
</dbReference>
<dbReference type="GO" id="GO:0001774">
    <property type="term" value="P:microglial cell activation"/>
    <property type="evidence" value="ECO:0000266"/>
    <property type="project" value="RGD"/>
</dbReference>
<dbReference type="GO" id="GO:0042789">
    <property type="term" value="P:mRNA transcription by RNA polymerase II"/>
    <property type="evidence" value="ECO:0000250"/>
    <property type="project" value="UniProtKB"/>
</dbReference>
<dbReference type="GO" id="GO:0043524">
    <property type="term" value="P:negative regulation of neuron apoptotic process"/>
    <property type="evidence" value="ECO:0000314"/>
    <property type="project" value="RGD"/>
</dbReference>
<dbReference type="GO" id="GO:0030593">
    <property type="term" value="P:neutrophil chemotaxis"/>
    <property type="evidence" value="ECO:0000266"/>
    <property type="project" value="RGD"/>
</dbReference>
<dbReference type="GO" id="GO:0007200">
    <property type="term" value="P:phospholipase C-activating G protein-coupled receptor signaling pathway"/>
    <property type="evidence" value="ECO:0000318"/>
    <property type="project" value="GO_Central"/>
</dbReference>
<dbReference type="GO" id="GO:0045766">
    <property type="term" value="P:positive regulation of angiogenesis"/>
    <property type="evidence" value="ECO:0000266"/>
    <property type="project" value="RGD"/>
</dbReference>
<dbReference type="GO" id="GO:0007204">
    <property type="term" value="P:positive regulation of cytosolic calcium ion concentration"/>
    <property type="evidence" value="ECO:0000314"/>
    <property type="project" value="RGD"/>
</dbReference>
<dbReference type="GO" id="GO:0050679">
    <property type="term" value="P:positive regulation of epithelial cell proliferation"/>
    <property type="evidence" value="ECO:0000250"/>
    <property type="project" value="UniProtKB"/>
</dbReference>
<dbReference type="GO" id="GO:0070374">
    <property type="term" value="P:positive regulation of ERK1 and ERK2 cascade"/>
    <property type="evidence" value="ECO:0000250"/>
    <property type="project" value="UniProtKB"/>
</dbReference>
<dbReference type="GO" id="GO:0010759">
    <property type="term" value="P:positive regulation of macrophage chemotaxis"/>
    <property type="evidence" value="ECO:0000266"/>
    <property type="project" value="RGD"/>
</dbReference>
<dbReference type="GO" id="GO:0090023">
    <property type="term" value="P:positive regulation of neutrophil chemotaxis"/>
    <property type="evidence" value="ECO:0000266"/>
    <property type="project" value="RGD"/>
</dbReference>
<dbReference type="GO" id="GO:0010575">
    <property type="term" value="P:positive regulation of vascular endothelial growth factor production"/>
    <property type="evidence" value="ECO:0000266"/>
    <property type="project" value="RGD"/>
</dbReference>
<dbReference type="GO" id="GO:0099172">
    <property type="term" value="P:presynapse organization"/>
    <property type="evidence" value="ECO:0000266"/>
    <property type="project" value="RGD"/>
</dbReference>
<dbReference type="GO" id="GO:0032496">
    <property type="term" value="P:response to lipopolysaccharide"/>
    <property type="evidence" value="ECO:0000270"/>
    <property type="project" value="RGD"/>
</dbReference>
<dbReference type="GO" id="GO:0032494">
    <property type="term" value="P:response to peptidoglycan"/>
    <property type="evidence" value="ECO:0000266"/>
    <property type="project" value="RGD"/>
</dbReference>
<dbReference type="FunFam" id="1.20.1070.10:FF:000034">
    <property type="entry name" value="G-protein coupled receptor 1"/>
    <property type="match status" value="1"/>
</dbReference>
<dbReference type="Gene3D" id="1.20.1070.10">
    <property type="entry name" value="Rhodopsin 7-helix transmembrane proteins"/>
    <property type="match status" value="1"/>
</dbReference>
<dbReference type="InterPro" id="IPR002234">
    <property type="entry name" value="Anphylx_rcpt_C3a/C5a1-2"/>
</dbReference>
<dbReference type="InterPro" id="IPR000826">
    <property type="entry name" value="Formyl_rcpt-rel"/>
</dbReference>
<dbReference type="InterPro" id="IPR000276">
    <property type="entry name" value="GPCR_Rhodpsn"/>
</dbReference>
<dbReference type="InterPro" id="IPR017452">
    <property type="entry name" value="GPCR_Rhodpsn_7TM"/>
</dbReference>
<dbReference type="PANTHER" id="PTHR24225:SF29">
    <property type="entry name" value="C5A ANAPHYLATOXIN CHEMOTACTIC RECEPTOR 1"/>
    <property type="match status" value="1"/>
</dbReference>
<dbReference type="PANTHER" id="PTHR24225">
    <property type="entry name" value="CHEMOTACTIC RECEPTOR"/>
    <property type="match status" value="1"/>
</dbReference>
<dbReference type="Pfam" id="PF00001">
    <property type="entry name" value="7tm_1"/>
    <property type="match status" value="1"/>
</dbReference>
<dbReference type="PRINTS" id="PR01104">
    <property type="entry name" value="ANPHYLATOXNR"/>
</dbReference>
<dbReference type="PRINTS" id="PR00426">
    <property type="entry name" value="C5ANPHYLTXNR"/>
</dbReference>
<dbReference type="PRINTS" id="PR00237">
    <property type="entry name" value="GPCRRHODOPSN"/>
</dbReference>
<dbReference type="SUPFAM" id="SSF81321">
    <property type="entry name" value="Family A G protein-coupled receptor-like"/>
    <property type="match status" value="1"/>
</dbReference>
<dbReference type="PROSITE" id="PS00237">
    <property type="entry name" value="G_PROTEIN_RECEP_F1_1"/>
    <property type="match status" value="1"/>
</dbReference>
<dbReference type="PROSITE" id="PS50262">
    <property type="entry name" value="G_PROTEIN_RECEP_F1_2"/>
    <property type="match status" value="1"/>
</dbReference>
<sequence length="352" mass="39417">MDPISNDSSEITYDYSDGTPNPDMPADGVYIPKMEPGDIAALIIYLAVFLVGVTGNALVVWVTAFEAKRTVNAIWFLNLAVADLLSCLALPILFTSIVKHNHWPFGDQACIVLPSLILLNMYSSILLLATISADRFLLVFKPIWCQKFRRPGLAWMACGVTWVLALLLTIPSFVFRRIHKDPYSDSILCNIDYSKGPFFIEKAIAILRLMVGFVLPLLTLNICYTFLLIRTWSRKATRSTKTLKVVMAVVTCFFVFWLPYQVTGVILAWLPRSSSTFQSVERLNSLCVSLAYINCCVNPIIYVMAGQGFHGRLRRSLPSIIRNVLSEDSLGRDSKSFTRSTMDTSTQKSQAV</sequence>
<gene>
    <name type="primary">C5ar1</name>
    <name type="synonym">C5r1</name>
</gene>
<keyword id="KW-1003">Cell membrane</keyword>
<keyword id="KW-0145">Chemotaxis</keyword>
<keyword id="KW-0968">Cytoplasmic vesicle</keyword>
<keyword id="KW-1015">Disulfide bond</keyword>
<keyword id="KW-0297">G-protein coupled receptor</keyword>
<keyword id="KW-0325">Glycoprotein</keyword>
<keyword id="KW-0472">Membrane</keyword>
<keyword id="KW-0597">Phosphoprotein</keyword>
<keyword id="KW-0675">Receptor</keyword>
<keyword id="KW-1185">Reference proteome</keyword>
<keyword id="KW-0765">Sulfation</keyword>
<keyword id="KW-0807">Transducer</keyword>
<keyword id="KW-0812">Transmembrane</keyword>
<keyword id="KW-1133">Transmembrane helix</keyword>
<proteinExistence type="evidence at protein level"/>
<organism>
    <name type="scientific">Rattus norvegicus</name>
    <name type="common">Rat</name>
    <dbReference type="NCBI Taxonomy" id="10116"/>
    <lineage>
        <taxon>Eukaryota</taxon>
        <taxon>Metazoa</taxon>
        <taxon>Chordata</taxon>
        <taxon>Craniata</taxon>
        <taxon>Vertebrata</taxon>
        <taxon>Euteleostomi</taxon>
        <taxon>Mammalia</taxon>
        <taxon>Eutheria</taxon>
        <taxon>Euarchontoglires</taxon>
        <taxon>Glires</taxon>
        <taxon>Rodentia</taxon>
        <taxon>Myomorpha</taxon>
        <taxon>Muroidea</taxon>
        <taxon>Muridae</taxon>
        <taxon>Murinae</taxon>
        <taxon>Rattus</taxon>
    </lineage>
</organism>